<evidence type="ECO:0000250" key="1"/>
<evidence type="ECO:0000255" key="2"/>
<evidence type="ECO:0000255" key="3">
    <source>
        <dbReference type="PROSITE-ProRule" id="PRU10083"/>
    </source>
</evidence>
<evidence type="ECO:0000256" key="4">
    <source>
        <dbReference type="SAM" id="MobiDB-lite"/>
    </source>
</evidence>
<evidence type="ECO:0000305" key="5"/>
<comment type="function">
    <text evidence="1">Preferentially cleaves peptide bonds on the carboxyl-terminal side of aspartate and glutamate. Along with other extracellular proteases it is involved in colonization and infection of human tissues. Required for proteolytic maturation of thiol protease SspB and inactivation of SspC, an inhibitor of SspB. It is the most important protease for degradation of fibronectin-binding protein (FnBP) and surface protein A, which are involved in adherence to host cells. May also protect bacteria against host defense mechanism by cleaving the immunoglobulin classes IgG, IgA and IgM. May be involved in the stability of secreted lipases (By similarity).</text>
</comment>
<comment type="catalytic activity">
    <reaction evidence="3">
        <text>Preferential cleavage: Glu-|-Xaa, Asp-|-Xaa.</text>
        <dbReference type="EC" id="3.4.21.19"/>
    </reaction>
</comment>
<comment type="subcellular location">
    <subcellularLocation>
        <location evidence="1">Secreted</location>
    </subcellularLocation>
</comment>
<comment type="PTM">
    <text evidence="1">Proteolytically cleaved by aureolysin (aur). This cleavage leads to the activation of SspA (By similarity).</text>
</comment>
<comment type="miscellaneous">
    <text evidence="1">The cascade of activation of extracellular proteases proceeds from the metalloprotease aureolysin (aur), through SspA to SspB.</text>
</comment>
<comment type="similarity">
    <text evidence="5">Belongs to the peptidase S1B family.</text>
</comment>
<organism>
    <name type="scientific">Staphylococcus aureus (strain MW2)</name>
    <dbReference type="NCBI Taxonomy" id="196620"/>
    <lineage>
        <taxon>Bacteria</taxon>
        <taxon>Bacillati</taxon>
        <taxon>Bacillota</taxon>
        <taxon>Bacilli</taxon>
        <taxon>Bacillales</taxon>
        <taxon>Staphylococcaceae</taxon>
        <taxon>Staphylococcus</taxon>
    </lineage>
</organism>
<keyword id="KW-0378">Hydrolase</keyword>
<keyword id="KW-0645">Protease</keyword>
<keyword id="KW-0677">Repeat</keyword>
<keyword id="KW-0964">Secreted</keyword>
<keyword id="KW-0720">Serine protease</keyword>
<keyword id="KW-0732">Signal</keyword>
<keyword id="KW-0843">Virulence</keyword>
<keyword id="KW-0865">Zymogen</keyword>
<feature type="signal peptide" evidence="2">
    <location>
        <begin position="1"/>
        <end position="29"/>
    </location>
</feature>
<feature type="propeptide" id="PRO_0000026894" evidence="1">
    <location>
        <begin position="30"/>
        <end position="68"/>
    </location>
</feature>
<feature type="chain" id="PRO_0000026895" description="Glutamyl endopeptidase">
    <location>
        <begin position="69"/>
        <end position="327"/>
    </location>
</feature>
<feature type="repeat" description="1">
    <location>
        <begin position="289"/>
        <end position="291"/>
    </location>
</feature>
<feature type="repeat" description="2">
    <location>
        <begin position="292"/>
        <end position="294"/>
    </location>
</feature>
<feature type="repeat" description="3">
    <location>
        <begin position="295"/>
        <end position="297"/>
    </location>
</feature>
<feature type="repeat" description="4">
    <location>
        <begin position="298"/>
        <end position="300"/>
    </location>
</feature>
<feature type="repeat" description="5">
    <location>
        <begin position="301"/>
        <end position="303"/>
    </location>
</feature>
<feature type="repeat" description="6">
    <location>
        <begin position="304"/>
        <end position="306"/>
    </location>
</feature>
<feature type="repeat" description="7">
    <location>
        <begin position="307"/>
        <end position="309"/>
    </location>
</feature>
<feature type="repeat" description="8">
    <location>
        <begin position="310"/>
        <end position="312"/>
    </location>
</feature>
<feature type="repeat" description="9">
    <location>
        <begin position="313"/>
        <end position="315"/>
    </location>
</feature>
<feature type="region of interest" description="Disordered" evidence="4">
    <location>
        <begin position="33"/>
        <end position="61"/>
    </location>
</feature>
<feature type="region of interest" description="Disordered" evidence="4">
    <location>
        <begin position="283"/>
        <end position="327"/>
    </location>
</feature>
<feature type="region of interest" description="9 X 3 AA repeats of P-[DN]-N">
    <location>
        <begin position="289"/>
        <end position="315"/>
    </location>
</feature>
<feature type="compositionally biased region" description="Low complexity" evidence="4">
    <location>
        <begin position="40"/>
        <end position="54"/>
    </location>
</feature>
<feature type="compositionally biased region" description="Low complexity" evidence="4">
    <location>
        <begin position="286"/>
        <end position="327"/>
    </location>
</feature>
<feature type="active site" description="Charge relay system" evidence="3">
    <location>
        <position position="119"/>
    </location>
</feature>
<feature type="active site" description="Charge relay system" evidence="3">
    <location>
        <position position="161"/>
    </location>
</feature>
<feature type="active site" description="Charge relay system" evidence="3">
    <location>
        <position position="237"/>
    </location>
</feature>
<feature type="site" description="Cleavage; by aureolysin" evidence="1">
    <location>
        <begin position="68"/>
        <end position="69"/>
    </location>
</feature>
<sequence>MKGKFLKVSSLFVATLTTATLVSSPAANALSSKAMDNHPQQSQSSKQQTPKIQKGGNLKPLEQREHANVILPNNDRHQITDTTNGHYAPVTYIQVEAPTGTFIASGVVVGKDTLLTNKHVVDATHGDPHALKAFPSAINQDNYPNGGFTAEQITKYSGEGDLAIVKFSPNEQNKHIGEVVKPATMSNNAETQVNQNITVTGYPGDKPVATMWESKGKITYLKGEAMQYDLSTTGGNSGSPVFNEKNEVIGIHWGGVPNEFNGAVFINENVRNFLKQNIEDIHFANDDQPNNPDNPDNPNNPDNPNNPNNPDNPDNGDNNNSDNPDAA</sequence>
<accession>Q8NX98</accession>
<gene>
    <name type="primary">sspA</name>
    <name type="ordered locus">MW0932</name>
</gene>
<protein>
    <recommendedName>
        <fullName>Glutamyl endopeptidase</fullName>
        <ecNumber>3.4.21.19</ecNumber>
    </recommendedName>
    <alternativeName>
        <fullName>Endoproteinase Glu-C</fullName>
    </alternativeName>
    <alternativeName>
        <fullName>Staphylococcal serine proteinase</fullName>
    </alternativeName>
    <alternativeName>
        <fullName>V8 protease</fullName>
    </alternativeName>
    <alternativeName>
        <fullName>V8 proteinase</fullName>
    </alternativeName>
</protein>
<reference key="1">
    <citation type="journal article" date="2002" name="Lancet">
        <title>Genome and virulence determinants of high virulence community-acquired MRSA.</title>
        <authorList>
            <person name="Baba T."/>
            <person name="Takeuchi F."/>
            <person name="Kuroda M."/>
            <person name="Yuzawa H."/>
            <person name="Aoki K."/>
            <person name="Oguchi A."/>
            <person name="Nagai Y."/>
            <person name="Iwama N."/>
            <person name="Asano K."/>
            <person name="Naimi T."/>
            <person name="Kuroda H."/>
            <person name="Cui L."/>
            <person name="Yamamoto K."/>
            <person name="Hiramatsu K."/>
        </authorList>
    </citation>
    <scope>NUCLEOTIDE SEQUENCE [LARGE SCALE GENOMIC DNA]</scope>
    <source>
        <strain>MW2</strain>
    </source>
</reference>
<name>SSPA_STAAW</name>
<proteinExistence type="inferred from homology"/>
<dbReference type="EC" id="3.4.21.19"/>
<dbReference type="EMBL" id="BA000033">
    <property type="protein sequence ID" value="BAB94797.1"/>
    <property type="molecule type" value="Genomic_DNA"/>
</dbReference>
<dbReference type="RefSeq" id="WP_000676533.1">
    <property type="nucleotide sequence ID" value="NC_003923.1"/>
</dbReference>
<dbReference type="SMR" id="Q8NX98"/>
<dbReference type="MEROPS" id="S01.269"/>
<dbReference type="KEGG" id="sam:MW0932"/>
<dbReference type="HOGENOM" id="CLU_073589_1_0_9"/>
<dbReference type="PRO" id="PR:Q8NX98"/>
<dbReference type="GO" id="GO:0005576">
    <property type="term" value="C:extracellular region"/>
    <property type="evidence" value="ECO:0007669"/>
    <property type="project" value="UniProtKB-SubCell"/>
</dbReference>
<dbReference type="GO" id="GO:0004252">
    <property type="term" value="F:serine-type endopeptidase activity"/>
    <property type="evidence" value="ECO:0007669"/>
    <property type="project" value="InterPro"/>
</dbReference>
<dbReference type="GO" id="GO:0006508">
    <property type="term" value="P:proteolysis"/>
    <property type="evidence" value="ECO:0007669"/>
    <property type="project" value="UniProtKB-KW"/>
</dbReference>
<dbReference type="Gene3D" id="2.40.10.10">
    <property type="entry name" value="Trypsin-like serine proteases"/>
    <property type="match status" value="2"/>
</dbReference>
<dbReference type="InterPro" id="IPR050966">
    <property type="entry name" value="Glutamyl_endopeptidase"/>
</dbReference>
<dbReference type="InterPro" id="IPR009003">
    <property type="entry name" value="Peptidase_S1_PA"/>
</dbReference>
<dbReference type="InterPro" id="IPR043504">
    <property type="entry name" value="Peptidase_S1_PA_chymotrypsin"/>
</dbReference>
<dbReference type="InterPro" id="IPR008256">
    <property type="entry name" value="Peptidase_S1B"/>
</dbReference>
<dbReference type="InterPro" id="IPR008353">
    <property type="entry name" value="Peptidase_S1B_tx"/>
</dbReference>
<dbReference type="InterPro" id="IPR028301">
    <property type="entry name" value="V8_his_AS"/>
</dbReference>
<dbReference type="InterPro" id="IPR000126">
    <property type="entry name" value="V8_ser_AS"/>
</dbReference>
<dbReference type="PANTHER" id="PTHR15462">
    <property type="entry name" value="SERINE PROTEASE"/>
    <property type="match status" value="1"/>
</dbReference>
<dbReference type="PANTHER" id="PTHR15462:SF8">
    <property type="entry name" value="SERINE PROTEASE"/>
    <property type="match status" value="1"/>
</dbReference>
<dbReference type="Pfam" id="PF13365">
    <property type="entry name" value="Trypsin_2"/>
    <property type="match status" value="1"/>
</dbReference>
<dbReference type="PRINTS" id="PR01774">
    <property type="entry name" value="EXFOLTOXIN"/>
</dbReference>
<dbReference type="PRINTS" id="PR00839">
    <property type="entry name" value="V8PROTEASE"/>
</dbReference>
<dbReference type="SUPFAM" id="SSF50494">
    <property type="entry name" value="Trypsin-like serine proteases"/>
    <property type="match status" value="1"/>
</dbReference>
<dbReference type="PROSITE" id="PS00672">
    <property type="entry name" value="V8_HIS"/>
    <property type="match status" value="1"/>
</dbReference>
<dbReference type="PROSITE" id="PS00673">
    <property type="entry name" value="V8_SER"/>
    <property type="match status" value="1"/>
</dbReference>